<keyword id="KW-0413">Isomerase</keyword>
<keyword id="KW-0460">Magnesium</keyword>
<keyword id="KW-0479">Metal-binding</keyword>
<keyword id="KW-0597">Phosphoprotein</keyword>
<sequence>MQQSVRKLFGTDGVRGRANFEPMTVETTVLLGKAVARVLREGRSGKHRVVVGKDTRLSGYMFENALIAGLNSMGIETLVLGPIPTPGVAFITRAYRADAGIMISASHNPYRDNGIKIFSLEGFKISDVLEQRIETMVSEADFGPLPEDHAVGKNKRVIDAMGRYVEFVKATFPKGRTLKGLKIVLDCAHGASYKVAPSVFEELDAEVICYGCEPTGININEHCGALFPQVIQKAVIEHQAHLGIALDGDGDRIIMVDEKGHIVDGDMILSICAGDLKKRSALPHNRVVATIMTNFGVLKYLEGLGLQVFTSPVGDRHVLHAMLEHEVTLGGEQSGHMIFLDYNTTGDGIVSALQVLRIMIESESMLSDLTAPIVKSPQTLINVAVREKIPLETIPLIERTLRDVQDALGPSGRILLRYSGTENICRVMVEGHKKHQVDCLAKALADVIDAELGTGSRE</sequence>
<protein>
    <recommendedName>
        <fullName evidence="1">Phosphoglucosamine mutase</fullName>
        <ecNumber evidence="1">5.4.2.10</ecNumber>
    </recommendedName>
</protein>
<proteinExistence type="inferred from homology"/>
<gene>
    <name evidence="1" type="primary">glmM</name>
    <name type="synonym">pgm</name>
    <name type="ordered locus">CPn_0967</name>
    <name type="ordered locus">CP_0893</name>
    <name type="ordered locus">CpB1004</name>
</gene>
<feature type="chain" id="PRO_0000147868" description="Phosphoglucosamine mutase">
    <location>
        <begin position="1"/>
        <end position="458"/>
    </location>
</feature>
<feature type="active site" description="Phosphoserine intermediate" evidence="1">
    <location>
        <position position="106"/>
    </location>
</feature>
<feature type="binding site" description="via phosphate group" evidence="1">
    <location>
        <position position="106"/>
    </location>
    <ligand>
        <name>Mg(2+)</name>
        <dbReference type="ChEBI" id="CHEBI:18420"/>
    </ligand>
</feature>
<feature type="binding site" evidence="1">
    <location>
        <position position="247"/>
    </location>
    <ligand>
        <name>Mg(2+)</name>
        <dbReference type="ChEBI" id="CHEBI:18420"/>
    </ligand>
</feature>
<feature type="binding site" evidence="1">
    <location>
        <position position="249"/>
    </location>
    <ligand>
        <name>Mg(2+)</name>
        <dbReference type="ChEBI" id="CHEBI:18420"/>
    </ligand>
</feature>
<feature type="binding site" evidence="1">
    <location>
        <position position="251"/>
    </location>
    <ligand>
        <name>Mg(2+)</name>
        <dbReference type="ChEBI" id="CHEBI:18420"/>
    </ligand>
</feature>
<feature type="modified residue" description="Phosphoserine" evidence="1">
    <location>
        <position position="106"/>
    </location>
</feature>
<accession>Q9Z6U1</accession>
<accession>Q7AI05</accession>
<accession>Q7BWP6</accession>
<accession>Q7DE50</accession>
<organism>
    <name type="scientific">Chlamydia pneumoniae</name>
    <name type="common">Chlamydophila pneumoniae</name>
    <dbReference type="NCBI Taxonomy" id="83558"/>
    <lineage>
        <taxon>Bacteria</taxon>
        <taxon>Pseudomonadati</taxon>
        <taxon>Chlamydiota</taxon>
        <taxon>Chlamydiia</taxon>
        <taxon>Chlamydiales</taxon>
        <taxon>Chlamydiaceae</taxon>
        <taxon>Chlamydia/Chlamydophila group</taxon>
        <taxon>Chlamydia</taxon>
    </lineage>
</organism>
<name>GLMM_CHLPN</name>
<evidence type="ECO:0000255" key="1">
    <source>
        <dbReference type="HAMAP-Rule" id="MF_01554"/>
    </source>
</evidence>
<comment type="function">
    <text evidence="1">Catalyzes the conversion of glucosamine-6-phosphate to glucosamine-1-phosphate.</text>
</comment>
<comment type="catalytic activity">
    <reaction evidence="1">
        <text>alpha-D-glucosamine 1-phosphate = D-glucosamine 6-phosphate</text>
        <dbReference type="Rhea" id="RHEA:23424"/>
        <dbReference type="ChEBI" id="CHEBI:58516"/>
        <dbReference type="ChEBI" id="CHEBI:58725"/>
        <dbReference type="EC" id="5.4.2.10"/>
    </reaction>
</comment>
<comment type="cofactor">
    <cofactor evidence="1">
        <name>Mg(2+)</name>
        <dbReference type="ChEBI" id="CHEBI:18420"/>
    </cofactor>
    <text evidence="1">Binds 1 Mg(2+) ion per subunit.</text>
</comment>
<comment type="PTM">
    <text evidence="1">Activated by phosphorylation.</text>
</comment>
<comment type="similarity">
    <text evidence="1">Belongs to the phosphohexose mutase family.</text>
</comment>
<dbReference type="EC" id="5.4.2.10" evidence="1"/>
<dbReference type="EMBL" id="AE001363">
    <property type="protein sequence ID" value="AAD19103.1"/>
    <property type="molecule type" value="Genomic_DNA"/>
</dbReference>
<dbReference type="EMBL" id="AE002161">
    <property type="protein sequence ID" value="AAF38680.1"/>
    <property type="molecule type" value="Genomic_DNA"/>
</dbReference>
<dbReference type="EMBL" id="AE009440">
    <property type="protein sequence ID" value="AAP98933.1"/>
    <property type="molecule type" value="Genomic_DNA"/>
</dbReference>
<dbReference type="EMBL" id="BA000008">
    <property type="protein sequence ID" value="BAA99175.1"/>
    <property type="molecule type" value="Genomic_DNA"/>
</dbReference>
<dbReference type="PIR" id="D72012">
    <property type="entry name" value="D72012"/>
</dbReference>
<dbReference type="PIR" id="E86611">
    <property type="entry name" value="E86611"/>
</dbReference>
<dbReference type="RefSeq" id="NP_225160.1">
    <property type="nucleotide sequence ID" value="NC_000922.1"/>
</dbReference>
<dbReference type="RefSeq" id="WP_010883600.1">
    <property type="nucleotide sequence ID" value="NZ_LN847257.1"/>
</dbReference>
<dbReference type="SMR" id="Q9Z6U1"/>
<dbReference type="STRING" id="406984.CPK_ORF00382"/>
<dbReference type="GeneID" id="45051024"/>
<dbReference type="KEGG" id="cpa:CP_0893"/>
<dbReference type="KEGG" id="cpj:pgm"/>
<dbReference type="KEGG" id="cpn:CPn_0967"/>
<dbReference type="KEGG" id="cpt:CpB1004"/>
<dbReference type="PATRIC" id="fig|115713.3.peg.1058"/>
<dbReference type="eggNOG" id="COG1109">
    <property type="taxonomic scope" value="Bacteria"/>
</dbReference>
<dbReference type="HOGENOM" id="CLU_016950_7_0_0"/>
<dbReference type="OrthoDB" id="9806956at2"/>
<dbReference type="Proteomes" id="UP000000583">
    <property type="component" value="Chromosome"/>
</dbReference>
<dbReference type="Proteomes" id="UP000000801">
    <property type="component" value="Chromosome"/>
</dbReference>
<dbReference type="GO" id="GO:0005829">
    <property type="term" value="C:cytosol"/>
    <property type="evidence" value="ECO:0007669"/>
    <property type="project" value="TreeGrafter"/>
</dbReference>
<dbReference type="GO" id="GO:0000287">
    <property type="term" value="F:magnesium ion binding"/>
    <property type="evidence" value="ECO:0007669"/>
    <property type="project" value="UniProtKB-UniRule"/>
</dbReference>
<dbReference type="GO" id="GO:0008966">
    <property type="term" value="F:phosphoglucosamine mutase activity"/>
    <property type="evidence" value="ECO:0007669"/>
    <property type="project" value="UniProtKB-UniRule"/>
</dbReference>
<dbReference type="GO" id="GO:0004615">
    <property type="term" value="F:phosphomannomutase activity"/>
    <property type="evidence" value="ECO:0007669"/>
    <property type="project" value="TreeGrafter"/>
</dbReference>
<dbReference type="GO" id="GO:0005975">
    <property type="term" value="P:carbohydrate metabolic process"/>
    <property type="evidence" value="ECO:0007669"/>
    <property type="project" value="InterPro"/>
</dbReference>
<dbReference type="GO" id="GO:0009252">
    <property type="term" value="P:peptidoglycan biosynthetic process"/>
    <property type="evidence" value="ECO:0007669"/>
    <property type="project" value="TreeGrafter"/>
</dbReference>
<dbReference type="GO" id="GO:0006048">
    <property type="term" value="P:UDP-N-acetylglucosamine biosynthetic process"/>
    <property type="evidence" value="ECO:0007669"/>
    <property type="project" value="TreeGrafter"/>
</dbReference>
<dbReference type="CDD" id="cd05802">
    <property type="entry name" value="GlmM"/>
    <property type="match status" value="1"/>
</dbReference>
<dbReference type="FunFam" id="3.30.310.50:FF:000001">
    <property type="entry name" value="Phosphoglucosamine mutase"/>
    <property type="match status" value="1"/>
</dbReference>
<dbReference type="FunFam" id="3.40.120.10:FF:000001">
    <property type="entry name" value="Phosphoglucosamine mutase"/>
    <property type="match status" value="1"/>
</dbReference>
<dbReference type="FunFam" id="3.40.120.10:FF:000003">
    <property type="entry name" value="Phosphoglucosamine mutase"/>
    <property type="match status" value="1"/>
</dbReference>
<dbReference type="Gene3D" id="3.40.120.10">
    <property type="entry name" value="Alpha-D-Glucose-1,6-Bisphosphate, subunit A, domain 3"/>
    <property type="match status" value="3"/>
</dbReference>
<dbReference type="Gene3D" id="3.30.310.50">
    <property type="entry name" value="Alpha-D-phosphohexomutase, C-terminal domain"/>
    <property type="match status" value="1"/>
</dbReference>
<dbReference type="HAMAP" id="MF_01554_B">
    <property type="entry name" value="GlmM_B"/>
    <property type="match status" value="1"/>
</dbReference>
<dbReference type="InterPro" id="IPR005844">
    <property type="entry name" value="A-D-PHexomutase_a/b/a-I"/>
</dbReference>
<dbReference type="InterPro" id="IPR016055">
    <property type="entry name" value="A-D-PHexomutase_a/b/a-I/II/III"/>
</dbReference>
<dbReference type="InterPro" id="IPR005845">
    <property type="entry name" value="A-D-PHexomutase_a/b/a-II"/>
</dbReference>
<dbReference type="InterPro" id="IPR005846">
    <property type="entry name" value="A-D-PHexomutase_a/b/a-III"/>
</dbReference>
<dbReference type="InterPro" id="IPR005843">
    <property type="entry name" value="A-D-PHexomutase_C"/>
</dbReference>
<dbReference type="InterPro" id="IPR036900">
    <property type="entry name" value="A-D-PHexomutase_C_sf"/>
</dbReference>
<dbReference type="InterPro" id="IPR016066">
    <property type="entry name" value="A-D-PHexomutase_CS"/>
</dbReference>
<dbReference type="InterPro" id="IPR005841">
    <property type="entry name" value="Alpha-D-phosphohexomutase_SF"/>
</dbReference>
<dbReference type="InterPro" id="IPR006352">
    <property type="entry name" value="GlmM_bact"/>
</dbReference>
<dbReference type="InterPro" id="IPR050060">
    <property type="entry name" value="Phosphoglucosamine_mutase"/>
</dbReference>
<dbReference type="NCBIfam" id="TIGR01455">
    <property type="entry name" value="glmM"/>
    <property type="match status" value="1"/>
</dbReference>
<dbReference type="NCBIfam" id="NF008139">
    <property type="entry name" value="PRK10887.1"/>
    <property type="match status" value="1"/>
</dbReference>
<dbReference type="PANTHER" id="PTHR42946:SF1">
    <property type="entry name" value="PHOSPHOGLUCOMUTASE (ALPHA-D-GLUCOSE-1,6-BISPHOSPHATE-DEPENDENT)"/>
    <property type="match status" value="1"/>
</dbReference>
<dbReference type="PANTHER" id="PTHR42946">
    <property type="entry name" value="PHOSPHOHEXOSE MUTASE"/>
    <property type="match status" value="1"/>
</dbReference>
<dbReference type="Pfam" id="PF02878">
    <property type="entry name" value="PGM_PMM_I"/>
    <property type="match status" value="1"/>
</dbReference>
<dbReference type="Pfam" id="PF02879">
    <property type="entry name" value="PGM_PMM_II"/>
    <property type="match status" value="1"/>
</dbReference>
<dbReference type="Pfam" id="PF02880">
    <property type="entry name" value="PGM_PMM_III"/>
    <property type="match status" value="1"/>
</dbReference>
<dbReference type="Pfam" id="PF00408">
    <property type="entry name" value="PGM_PMM_IV"/>
    <property type="match status" value="1"/>
</dbReference>
<dbReference type="PRINTS" id="PR00509">
    <property type="entry name" value="PGMPMM"/>
</dbReference>
<dbReference type="SUPFAM" id="SSF55957">
    <property type="entry name" value="Phosphoglucomutase, C-terminal domain"/>
    <property type="match status" value="1"/>
</dbReference>
<dbReference type="SUPFAM" id="SSF53738">
    <property type="entry name" value="Phosphoglucomutase, first 3 domains"/>
    <property type="match status" value="3"/>
</dbReference>
<dbReference type="PROSITE" id="PS00710">
    <property type="entry name" value="PGM_PMM"/>
    <property type="match status" value="1"/>
</dbReference>
<reference key="1">
    <citation type="journal article" date="1999" name="Nat. Genet.">
        <title>Comparative genomes of Chlamydia pneumoniae and C. trachomatis.</title>
        <authorList>
            <person name="Kalman S."/>
            <person name="Mitchell W.P."/>
            <person name="Marathe R."/>
            <person name="Lammel C.J."/>
            <person name="Fan J."/>
            <person name="Hyman R.W."/>
            <person name="Olinger L."/>
            <person name="Grimwood J."/>
            <person name="Davis R.W."/>
            <person name="Stephens R.S."/>
        </authorList>
    </citation>
    <scope>NUCLEOTIDE SEQUENCE [LARGE SCALE GENOMIC DNA]</scope>
    <source>
        <strain>CWL029</strain>
    </source>
</reference>
<reference key="2">
    <citation type="journal article" date="2000" name="Nucleic Acids Res.">
        <title>Genome sequences of Chlamydia trachomatis MoPn and Chlamydia pneumoniae AR39.</title>
        <authorList>
            <person name="Read T.D."/>
            <person name="Brunham R.C."/>
            <person name="Shen C."/>
            <person name="Gill S.R."/>
            <person name="Heidelberg J.F."/>
            <person name="White O."/>
            <person name="Hickey E.K."/>
            <person name="Peterson J.D."/>
            <person name="Utterback T.R."/>
            <person name="Berry K.J."/>
            <person name="Bass S."/>
            <person name="Linher K.D."/>
            <person name="Weidman J.F."/>
            <person name="Khouri H.M."/>
            <person name="Craven B."/>
            <person name="Bowman C."/>
            <person name="Dodson R.J."/>
            <person name="Gwinn M.L."/>
            <person name="Nelson W.C."/>
            <person name="DeBoy R.T."/>
            <person name="Kolonay J.F."/>
            <person name="McClarty G."/>
            <person name="Salzberg S.L."/>
            <person name="Eisen J.A."/>
            <person name="Fraser C.M."/>
        </authorList>
    </citation>
    <scope>NUCLEOTIDE SEQUENCE [LARGE SCALE GENOMIC DNA]</scope>
    <source>
        <strain>AR39</strain>
    </source>
</reference>
<reference key="3">
    <citation type="submission" date="2002-05" db="EMBL/GenBank/DDBJ databases">
        <title>The genome sequence of Chlamydia pneumoniae TW183 and comparison with other Chlamydia strains based on whole genome sequence analysis.</title>
        <authorList>
            <person name="Geng M.M."/>
            <person name="Schuhmacher A."/>
            <person name="Muehldorfer I."/>
            <person name="Bensch K.W."/>
            <person name="Schaefer K.P."/>
            <person name="Schneider S."/>
            <person name="Pohl T."/>
            <person name="Essig A."/>
            <person name="Marre R."/>
            <person name="Melchers K."/>
        </authorList>
    </citation>
    <scope>NUCLEOTIDE SEQUENCE [LARGE SCALE GENOMIC DNA]</scope>
    <source>
        <strain>TW-183</strain>
    </source>
</reference>
<reference key="4">
    <citation type="journal article" date="2000" name="Nucleic Acids Res.">
        <title>Comparison of whole genome sequences of Chlamydia pneumoniae J138 from Japan and CWL029 from USA.</title>
        <authorList>
            <person name="Shirai M."/>
            <person name="Hirakawa H."/>
            <person name="Kimoto M."/>
            <person name="Tabuchi M."/>
            <person name="Kishi F."/>
            <person name="Ouchi K."/>
            <person name="Shiba T."/>
            <person name="Ishii K."/>
            <person name="Hattori M."/>
            <person name="Kuhara S."/>
            <person name="Nakazawa T."/>
        </authorList>
    </citation>
    <scope>NUCLEOTIDE SEQUENCE [LARGE SCALE GENOMIC DNA]</scope>
    <source>
        <strain>J138</strain>
    </source>
</reference>